<feature type="chain" id="PRO_0000212883" description="Palmitoyltransferase ZDHHC11">
    <location>
        <begin position="1"/>
        <end position="412"/>
    </location>
</feature>
<feature type="topological domain" description="Cytoplasmic" evidence="10">
    <location>
        <begin position="1"/>
        <end position="42"/>
    </location>
</feature>
<feature type="transmembrane region" description="Helical" evidence="3">
    <location>
        <begin position="43"/>
        <end position="63"/>
    </location>
</feature>
<feature type="topological domain" description="Lumenal" evidence="10">
    <location>
        <begin position="64"/>
        <end position="69"/>
    </location>
</feature>
<feature type="transmembrane region" description="Helical" evidence="3">
    <location>
        <begin position="70"/>
        <end position="90"/>
    </location>
</feature>
<feature type="topological domain" description="Cytoplasmic" evidence="10">
    <location>
        <begin position="91"/>
        <end position="176"/>
    </location>
</feature>
<feature type="transmembrane region" description="Helical" evidence="3">
    <location>
        <begin position="177"/>
        <end position="197"/>
    </location>
</feature>
<feature type="topological domain" description="Lumenal" evidence="10">
    <location>
        <begin position="198"/>
        <end position="230"/>
    </location>
</feature>
<feature type="transmembrane region" description="Helical" evidence="3">
    <location>
        <begin position="231"/>
        <end position="251"/>
    </location>
</feature>
<feature type="topological domain" description="Cytoplasmic" evidence="10">
    <location>
        <begin position="252"/>
        <end position="412"/>
    </location>
</feature>
<feature type="domain" description="DHHC" evidence="4">
    <location>
        <begin position="125"/>
        <end position="175"/>
    </location>
</feature>
<feature type="region of interest" description="Mediates interaction with IRF3 and STING1" evidence="7">
    <location>
        <begin position="198"/>
        <end position="412"/>
    </location>
</feature>
<feature type="region of interest" description="Disordered" evidence="5">
    <location>
        <begin position="374"/>
        <end position="412"/>
    </location>
</feature>
<feature type="compositionally biased region" description="Polar residues" evidence="5">
    <location>
        <begin position="389"/>
        <end position="400"/>
    </location>
</feature>
<feature type="compositionally biased region" description="Basic and acidic residues" evidence="5">
    <location>
        <begin position="401"/>
        <end position="412"/>
    </location>
</feature>
<feature type="active site" description="S-palmitoyl cysteine intermediate" evidence="1 4">
    <location>
        <position position="155"/>
    </location>
</feature>
<feature type="splice variant" id="VSP_055997" description="In isoform 2." evidence="8">
    <location>
        <begin position="1"/>
        <end position="213"/>
    </location>
</feature>
<feature type="splice variant" id="VSP_055998" description="In isoform 2." evidence="8">
    <original>KAKKMTTFEYLINNRKEESSKHQAVRKDPYVQMDKGVLQQGAGALGSSAQGVKAKSSLLIHKHLCHFCTSVNQDGDSTAREGDEDPCPSALGAK</original>
    <variation>SMSPTLSPRSPQGWVVRAAHLTPLLEYVPNPEPPTPGARVFVPRVRMCSGSASPRSEIMDKKGKSQEEIKSMRTQQAQQEAELTPRPAGVVPGA</variation>
    <location>
        <begin position="262"/>
        <end position="355"/>
    </location>
</feature>
<feature type="splice variant" id="VSP_055999" description="In isoform 2." evidence="8">
    <location>
        <begin position="356"/>
        <end position="412"/>
    </location>
</feature>
<feature type="sequence variant" id="VAR_052975" description="In dbSNP:rs2878468.">
    <original>L</original>
    <variation>S</variation>
    <location>
        <position position="325"/>
    </location>
</feature>
<feature type="sequence variant" id="VAR_024704" description="In dbSNP:rs1809008.">
    <original>R</original>
    <variation>Q</variation>
    <location>
        <position position="341"/>
    </location>
</feature>
<feature type="sequence variant" id="VAR_021998" description="In dbSNP:rs3747738.">
    <original>R</original>
    <variation>H</variation>
    <location>
        <position position="372"/>
    </location>
</feature>
<feature type="mutagenesis site" description="No effect on the regulation of STING1-mediated innate immune response." evidence="7">
    <original>DH</original>
    <variation>AA</variation>
    <location>
        <begin position="152"/>
        <end position="153"/>
    </location>
</feature>
<feature type="mutagenesis site" description="No effect on the regulation of STING1-mediated innate immune response." evidence="7">
    <original>C</original>
    <variation>S</variation>
    <location>
        <position position="155"/>
    </location>
</feature>
<gene>
    <name evidence="11" type="primary">ZDHHC11</name>
    <name evidence="11" type="synonym">ZNF399</name>
</gene>
<reference key="1">
    <citation type="journal article" date="2003" name="Genome Res.">
        <title>The secreted protein discovery initiative (SPDI), a large-scale effort to identify novel human secreted and transmembrane proteins: a bioinformatics assessment.</title>
        <authorList>
            <person name="Clark H.F."/>
            <person name="Gurney A.L."/>
            <person name="Abaya E."/>
            <person name="Baker K."/>
            <person name="Baldwin D.T."/>
            <person name="Brush J."/>
            <person name="Chen J."/>
            <person name="Chow B."/>
            <person name="Chui C."/>
            <person name="Crowley C."/>
            <person name="Currell B."/>
            <person name="Deuel B."/>
            <person name="Dowd P."/>
            <person name="Eaton D."/>
            <person name="Foster J.S."/>
            <person name="Grimaldi C."/>
            <person name="Gu Q."/>
            <person name="Hass P.E."/>
            <person name="Heldens S."/>
            <person name="Huang A."/>
            <person name="Kim H.S."/>
            <person name="Klimowski L."/>
            <person name="Jin Y."/>
            <person name="Johnson S."/>
            <person name="Lee J."/>
            <person name="Lewis L."/>
            <person name="Liao D."/>
            <person name="Mark M.R."/>
            <person name="Robbie E."/>
            <person name="Sanchez C."/>
            <person name="Schoenfeld J."/>
            <person name="Seshagiri S."/>
            <person name="Simmons L."/>
            <person name="Singh J."/>
            <person name="Smith V."/>
            <person name="Stinson J."/>
            <person name="Vagts A."/>
            <person name="Vandlen R.L."/>
            <person name="Watanabe C."/>
            <person name="Wieand D."/>
            <person name="Woods K."/>
            <person name="Xie M.-H."/>
            <person name="Yansura D.G."/>
            <person name="Yi S."/>
            <person name="Yu G."/>
            <person name="Yuan J."/>
            <person name="Zhang M."/>
            <person name="Zhang Z."/>
            <person name="Goddard A.D."/>
            <person name="Wood W.I."/>
            <person name="Godowski P.J."/>
            <person name="Gray A.M."/>
        </authorList>
    </citation>
    <scope>NUCLEOTIDE SEQUENCE [LARGE SCALE MRNA] (ISOFORM 2)</scope>
</reference>
<reference key="2">
    <citation type="journal article" date="2004" name="Nat. Genet.">
        <title>Complete sequencing and characterization of 21,243 full-length human cDNAs.</title>
        <authorList>
            <person name="Ota T."/>
            <person name="Suzuki Y."/>
            <person name="Nishikawa T."/>
            <person name="Otsuki T."/>
            <person name="Sugiyama T."/>
            <person name="Irie R."/>
            <person name="Wakamatsu A."/>
            <person name="Hayashi K."/>
            <person name="Sato H."/>
            <person name="Nagai K."/>
            <person name="Kimura K."/>
            <person name="Makita H."/>
            <person name="Sekine M."/>
            <person name="Obayashi M."/>
            <person name="Nishi T."/>
            <person name="Shibahara T."/>
            <person name="Tanaka T."/>
            <person name="Ishii S."/>
            <person name="Yamamoto J."/>
            <person name="Saito K."/>
            <person name="Kawai Y."/>
            <person name="Isono Y."/>
            <person name="Nakamura Y."/>
            <person name="Nagahari K."/>
            <person name="Murakami K."/>
            <person name="Yasuda T."/>
            <person name="Iwayanagi T."/>
            <person name="Wagatsuma M."/>
            <person name="Shiratori A."/>
            <person name="Sudo H."/>
            <person name="Hosoiri T."/>
            <person name="Kaku Y."/>
            <person name="Kodaira H."/>
            <person name="Kondo H."/>
            <person name="Sugawara M."/>
            <person name="Takahashi M."/>
            <person name="Kanda K."/>
            <person name="Yokoi T."/>
            <person name="Furuya T."/>
            <person name="Kikkawa E."/>
            <person name="Omura Y."/>
            <person name="Abe K."/>
            <person name="Kamihara K."/>
            <person name="Katsuta N."/>
            <person name="Sato K."/>
            <person name="Tanikawa M."/>
            <person name="Yamazaki M."/>
            <person name="Ninomiya K."/>
            <person name="Ishibashi T."/>
            <person name="Yamashita H."/>
            <person name="Murakawa K."/>
            <person name="Fujimori K."/>
            <person name="Tanai H."/>
            <person name="Kimata M."/>
            <person name="Watanabe M."/>
            <person name="Hiraoka S."/>
            <person name="Chiba Y."/>
            <person name="Ishida S."/>
            <person name="Ono Y."/>
            <person name="Takiguchi S."/>
            <person name="Watanabe S."/>
            <person name="Yosida M."/>
            <person name="Hotuta T."/>
            <person name="Kusano J."/>
            <person name="Kanehori K."/>
            <person name="Takahashi-Fujii A."/>
            <person name="Hara H."/>
            <person name="Tanase T.-O."/>
            <person name="Nomura Y."/>
            <person name="Togiya S."/>
            <person name="Komai F."/>
            <person name="Hara R."/>
            <person name="Takeuchi K."/>
            <person name="Arita M."/>
            <person name="Imose N."/>
            <person name="Musashino K."/>
            <person name="Yuuki H."/>
            <person name="Oshima A."/>
            <person name="Sasaki N."/>
            <person name="Aotsuka S."/>
            <person name="Yoshikawa Y."/>
            <person name="Matsunawa H."/>
            <person name="Ichihara T."/>
            <person name="Shiohata N."/>
            <person name="Sano S."/>
            <person name="Moriya S."/>
            <person name="Momiyama H."/>
            <person name="Satoh N."/>
            <person name="Takami S."/>
            <person name="Terashima Y."/>
            <person name="Suzuki O."/>
            <person name="Nakagawa S."/>
            <person name="Senoh A."/>
            <person name="Mizoguchi H."/>
            <person name="Goto Y."/>
            <person name="Shimizu F."/>
            <person name="Wakebe H."/>
            <person name="Hishigaki H."/>
            <person name="Watanabe T."/>
            <person name="Sugiyama A."/>
            <person name="Takemoto M."/>
            <person name="Kawakami B."/>
            <person name="Yamazaki M."/>
            <person name="Watanabe K."/>
            <person name="Kumagai A."/>
            <person name="Itakura S."/>
            <person name="Fukuzumi Y."/>
            <person name="Fujimori Y."/>
            <person name="Komiyama M."/>
            <person name="Tashiro H."/>
            <person name="Tanigami A."/>
            <person name="Fujiwara T."/>
            <person name="Ono T."/>
            <person name="Yamada K."/>
            <person name="Fujii Y."/>
            <person name="Ozaki K."/>
            <person name="Hirao M."/>
            <person name="Ohmori Y."/>
            <person name="Kawabata A."/>
            <person name="Hikiji T."/>
            <person name="Kobatake N."/>
            <person name="Inagaki H."/>
            <person name="Ikema Y."/>
            <person name="Okamoto S."/>
            <person name="Okitani R."/>
            <person name="Kawakami T."/>
            <person name="Noguchi S."/>
            <person name="Itoh T."/>
            <person name="Shigeta K."/>
            <person name="Senba T."/>
            <person name="Matsumura K."/>
            <person name="Nakajima Y."/>
            <person name="Mizuno T."/>
            <person name="Morinaga M."/>
            <person name="Sasaki M."/>
            <person name="Togashi T."/>
            <person name="Oyama M."/>
            <person name="Hata H."/>
            <person name="Watanabe M."/>
            <person name="Komatsu T."/>
            <person name="Mizushima-Sugano J."/>
            <person name="Satoh T."/>
            <person name="Shirai Y."/>
            <person name="Takahashi Y."/>
            <person name="Nakagawa K."/>
            <person name="Okumura K."/>
            <person name="Nagase T."/>
            <person name="Nomura N."/>
            <person name="Kikuchi H."/>
            <person name="Masuho Y."/>
            <person name="Yamashita R."/>
            <person name="Nakai K."/>
            <person name="Yada T."/>
            <person name="Nakamura Y."/>
            <person name="Ohara O."/>
            <person name="Isogai T."/>
            <person name="Sugano S."/>
        </authorList>
    </citation>
    <scope>NUCLEOTIDE SEQUENCE [LARGE SCALE MRNA] (ISOFORM 1)</scope>
</reference>
<reference key="3">
    <citation type="journal article" date="2004" name="Nature">
        <title>The DNA sequence and comparative analysis of human chromosome 5.</title>
        <authorList>
            <person name="Schmutz J."/>
            <person name="Martin J."/>
            <person name="Terry A."/>
            <person name="Couronne O."/>
            <person name="Grimwood J."/>
            <person name="Lowry S."/>
            <person name="Gordon L.A."/>
            <person name="Scott D."/>
            <person name="Xie G."/>
            <person name="Huang W."/>
            <person name="Hellsten U."/>
            <person name="Tran-Gyamfi M."/>
            <person name="She X."/>
            <person name="Prabhakar S."/>
            <person name="Aerts A."/>
            <person name="Altherr M."/>
            <person name="Bajorek E."/>
            <person name="Black S."/>
            <person name="Branscomb E."/>
            <person name="Caoile C."/>
            <person name="Challacombe J.F."/>
            <person name="Chan Y.M."/>
            <person name="Denys M."/>
            <person name="Detter J.C."/>
            <person name="Escobar J."/>
            <person name="Flowers D."/>
            <person name="Fotopulos D."/>
            <person name="Glavina T."/>
            <person name="Gomez M."/>
            <person name="Gonzales E."/>
            <person name="Goodstein D."/>
            <person name="Grigoriev I."/>
            <person name="Groza M."/>
            <person name="Hammon N."/>
            <person name="Hawkins T."/>
            <person name="Haydu L."/>
            <person name="Israni S."/>
            <person name="Jett J."/>
            <person name="Kadner K."/>
            <person name="Kimball H."/>
            <person name="Kobayashi A."/>
            <person name="Lopez F."/>
            <person name="Lou Y."/>
            <person name="Martinez D."/>
            <person name="Medina C."/>
            <person name="Morgan J."/>
            <person name="Nandkeshwar R."/>
            <person name="Noonan J.P."/>
            <person name="Pitluck S."/>
            <person name="Pollard M."/>
            <person name="Predki P."/>
            <person name="Priest J."/>
            <person name="Ramirez L."/>
            <person name="Retterer J."/>
            <person name="Rodriguez A."/>
            <person name="Rogers S."/>
            <person name="Salamov A."/>
            <person name="Salazar A."/>
            <person name="Thayer N."/>
            <person name="Tice H."/>
            <person name="Tsai M."/>
            <person name="Ustaszewska A."/>
            <person name="Vo N."/>
            <person name="Wheeler J."/>
            <person name="Wu K."/>
            <person name="Yang J."/>
            <person name="Dickson M."/>
            <person name="Cheng J.-F."/>
            <person name="Eichler E.E."/>
            <person name="Olsen A."/>
            <person name="Pennacchio L.A."/>
            <person name="Rokhsar D.S."/>
            <person name="Richardson P."/>
            <person name="Lucas S.M."/>
            <person name="Myers R.M."/>
            <person name="Rubin E.M."/>
        </authorList>
    </citation>
    <scope>NUCLEOTIDE SEQUENCE [LARGE SCALE GENOMIC DNA]</scope>
</reference>
<reference key="4">
    <citation type="journal article" date="2004" name="Genome Res.">
        <title>The status, quality, and expansion of the NIH full-length cDNA project: the Mammalian Gene Collection (MGC).</title>
        <authorList>
            <consortium name="The MGC Project Team"/>
        </authorList>
    </citation>
    <scope>NUCLEOTIDE SEQUENCE [LARGE SCALE MRNA] (ISOFORM 1)</scope>
    <source>
        <tissue>Skin</tissue>
    </source>
</reference>
<reference key="5">
    <citation type="journal article" date="2006" name="Biochim. Biophys. Acta">
        <title>Intracellular localization and tissue-specific distribution of human and yeast DHHC cysteine-rich domain-containing proteins.</title>
        <authorList>
            <person name="Ohno Y."/>
            <person name="Kihara A."/>
            <person name="Sano T."/>
            <person name="Igarashi Y."/>
        </authorList>
    </citation>
    <scope>SUBCELLULAR LOCATION</scope>
    <scope>TISSUE SPECIFICITY</scope>
</reference>
<reference key="6">
    <citation type="journal article" date="2017" name="Leukemia">
        <title>ZDHHC11 and ZDHHC11B are critical novel components of the oncogenic MYC-miR-150-MYB network in Burkitt lymphoma.</title>
        <authorList>
            <person name="Dzikiewicz-Krawczyk A."/>
            <person name="Kok K."/>
            <person name="Slezak-Prochazka I."/>
            <person name="Robertus J.L."/>
            <person name="Bruining J."/>
            <person name="Tayari M.M."/>
            <person name="Rutgers B."/>
            <person name="de Jong D."/>
            <person name="Koerts J."/>
            <person name="Seitz A."/>
            <person name="Li J."/>
            <person name="Tillema B."/>
            <person name="Guikema J.E."/>
            <person name="Nolte I.M."/>
            <person name="Diepstra A."/>
            <person name="Visser L."/>
            <person name="Kluiver J."/>
            <person name="van den Berg A."/>
        </authorList>
    </citation>
    <scope>FUNCTION</scope>
    <scope>INTERACTION WITH IRF3 AND STING1</scope>
    <scope>REGION</scope>
    <scope>MUTAGENESIS OF 152-ASP-HIS-153 AND CYS-155</scope>
</reference>
<proteinExistence type="evidence at protein level"/>
<dbReference type="EC" id="2.3.1.225" evidence="1"/>
<dbReference type="EMBL" id="AY358673">
    <property type="protein sequence ID" value="AAQ89036.1"/>
    <property type="molecule type" value="mRNA"/>
</dbReference>
<dbReference type="EMBL" id="AK023215">
    <property type="protein sequence ID" value="BAB14468.1"/>
    <property type="molecule type" value="mRNA"/>
</dbReference>
<dbReference type="EMBL" id="AC010427">
    <property type="status" value="NOT_ANNOTATED_CDS"/>
    <property type="molecule type" value="Genomic_DNA"/>
</dbReference>
<dbReference type="EMBL" id="AC026740">
    <property type="status" value="NOT_ANNOTATED_CDS"/>
    <property type="molecule type" value="Genomic_DNA"/>
</dbReference>
<dbReference type="EMBL" id="AC122719">
    <property type="status" value="NOT_ANNOTATED_CDS"/>
    <property type="molecule type" value="Genomic_DNA"/>
</dbReference>
<dbReference type="EMBL" id="BC032000">
    <property type="protein sequence ID" value="AAH32000.1"/>
    <property type="molecule type" value="mRNA"/>
</dbReference>
<dbReference type="CCDS" id="CCDS3857.1">
    <molecule id="Q9H8X9-1"/>
</dbReference>
<dbReference type="RefSeq" id="NP_079062.1">
    <molecule id="Q9H8X9-1"/>
    <property type="nucleotide sequence ID" value="NM_024786.3"/>
</dbReference>
<dbReference type="RefSeq" id="XP_024301980.1">
    <molecule id="Q9H8X9-1"/>
    <property type="nucleotide sequence ID" value="XM_024446212.2"/>
</dbReference>
<dbReference type="RefSeq" id="XP_054209481.1">
    <molecule id="Q9H8X9-1"/>
    <property type="nucleotide sequence ID" value="XM_054353506.1"/>
</dbReference>
<dbReference type="BioGRID" id="122935">
    <property type="interactions" value="22"/>
</dbReference>
<dbReference type="FunCoup" id="Q9H8X9">
    <property type="interactions" value="289"/>
</dbReference>
<dbReference type="IntAct" id="Q9H8X9">
    <property type="interactions" value="18"/>
</dbReference>
<dbReference type="MINT" id="Q9H8X9"/>
<dbReference type="STRING" id="9606.ENSP00000283441"/>
<dbReference type="iPTMnet" id="Q9H8X9"/>
<dbReference type="PhosphoSitePlus" id="Q9H8X9"/>
<dbReference type="SwissPalm" id="Q9H8X9"/>
<dbReference type="BioMuta" id="ZDHHC11"/>
<dbReference type="DMDM" id="28202107"/>
<dbReference type="MassIVE" id="Q9H8X9"/>
<dbReference type="PaxDb" id="9606-ENSP00000283441"/>
<dbReference type="PeptideAtlas" id="Q9H8X9"/>
<dbReference type="ProteomicsDB" id="67517"/>
<dbReference type="ProteomicsDB" id="81254">
    <molecule id="Q9H8X9-1"/>
</dbReference>
<dbReference type="Antibodypedia" id="22260">
    <property type="antibodies" value="35 antibodies from 14 providers"/>
</dbReference>
<dbReference type="DNASU" id="79844"/>
<dbReference type="Ensembl" id="ENST00000283441.13">
    <molecule id="Q9H8X9-1"/>
    <property type="protein sequence ID" value="ENSP00000283441.8"/>
    <property type="gene ID" value="ENSG00000188818.13"/>
</dbReference>
<dbReference type="Ensembl" id="ENST00000511539.1">
    <molecule id="Q9H8X9-2"/>
    <property type="protein sequence ID" value="ENSP00000427067.1"/>
    <property type="gene ID" value="ENSG00000188818.13"/>
</dbReference>
<dbReference type="GeneID" id="79844"/>
<dbReference type="KEGG" id="hsa:79844"/>
<dbReference type="MANE-Select" id="ENST00000283441.13">
    <property type="protein sequence ID" value="ENSP00000283441.8"/>
    <property type="RefSeq nucleotide sequence ID" value="NM_024786.3"/>
    <property type="RefSeq protein sequence ID" value="NP_079062.1"/>
</dbReference>
<dbReference type="UCSC" id="uc003jbk.5">
    <molecule id="Q9H8X9-1"/>
    <property type="organism name" value="human"/>
</dbReference>
<dbReference type="AGR" id="HGNC:19158"/>
<dbReference type="CTD" id="79844"/>
<dbReference type="DisGeNET" id="79844"/>
<dbReference type="GeneCards" id="ZDHHC11"/>
<dbReference type="HGNC" id="HGNC:19158">
    <property type="gene designation" value="ZDHHC11"/>
</dbReference>
<dbReference type="HPA" id="ENSG00000188818">
    <property type="expression patterns" value="Low tissue specificity"/>
</dbReference>
<dbReference type="neXtProt" id="NX_Q9H8X9"/>
<dbReference type="OpenTargets" id="ENSG00000188818"/>
<dbReference type="PharmGKB" id="PA38801"/>
<dbReference type="VEuPathDB" id="HostDB:ENSG00000188818"/>
<dbReference type="eggNOG" id="KOG1311">
    <property type="taxonomic scope" value="Eukaryota"/>
</dbReference>
<dbReference type="GeneTree" id="ENSGT00940000161608"/>
<dbReference type="HOGENOM" id="CLU_020283_1_1_1"/>
<dbReference type="InParanoid" id="Q9H8X9"/>
<dbReference type="OMA" id="ICGFVEP"/>
<dbReference type="OrthoDB" id="9539733at2759"/>
<dbReference type="PAN-GO" id="Q9H8X9">
    <property type="GO annotations" value="5 GO annotations based on evolutionary models"/>
</dbReference>
<dbReference type="PhylomeDB" id="Q9H8X9"/>
<dbReference type="TreeFam" id="TF317498"/>
<dbReference type="PathwayCommons" id="Q9H8X9"/>
<dbReference type="Reactome" id="R-HSA-9694548">
    <property type="pathway name" value="Maturation of spike protein"/>
</dbReference>
<dbReference type="SignaLink" id="Q9H8X9"/>
<dbReference type="BioGRID-ORCS" id="79844">
    <property type="hits" value="22 hits in 1139 CRISPR screens"/>
</dbReference>
<dbReference type="ChiTaRS" id="ZDHHC11">
    <property type="organism name" value="human"/>
</dbReference>
<dbReference type="GenomeRNAi" id="79844"/>
<dbReference type="Pharos" id="Q9H8X9">
    <property type="development level" value="Tbio"/>
</dbReference>
<dbReference type="PRO" id="PR:Q9H8X9"/>
<dbReference type="Proteomes" id="UP000005640">
    <property type="component" value="Chromosome 5"/>
</dbReference>
<dbReference type="RNAct" id="Q9H8X9">
    <property type="molecule type" value="protein"/>
</dbReference>
<dbReference type="Bgee" id="ENSG00000188818">
    <property type="expression patterns" value="Expressed in right uterine tube and 184 other cell types or tissues"/>
</dbReference>
<dbReference type="ExpressionAtlas" id="Q9H8X9">
    <property type="expression patterns" value="baseline and differential"/>
</dbReference>
<dbReference type="GO" id="GO:0005783">
    <property type="term" value="C:endoplasmic reticulum"/>
    <property type="evidence" value="ECO:0000314"/>
    <property type="project" value="UniProtKB"/>
</dbReference>
<dbReference type="GO" id="GO:0005789">
    <property type="term" value="C:endoplasmic reticulum membrane"/>
    <property type="evidence" value="ECO:0007669"/>
    <property type="project" value="UniProtKB-SubCell"/>
</dbReference>
<dbReference type="GO" id="GO:0010008">
    <property type="term" value="C:endosome membrane"/>
    <property type="evidence" value="ECO:0000250"/>
    <property type="project" value="UniProtKB"/>
</dbReference>
<dbReference type="GO" id="GO:0005794">
    <property type="term" value="C:Golgi apparatus"/>
    <property type="evidence" value="ECO:0000318"/>
    <property type="project" value="GO_Central"/>
</dbReference>
<dbReference type="GO" id="GO:0000139">
    <property type="term" value="C:Golgi membrane"/>
    <property type="evidence" value="ECO:0000304"/>
    <property type="project" value="Reactome"/>
</dbReference>
<dbReference type="GO" id="GO:0019706">
    <property type="term" value="F:protein-cysteine S-palmitoyltransferase activity"/>
    <property type="evidence" value="ECO:0000250"/>
    <property type="project" value="UniProtKB"/>
</dbReference>
<dbReference type="GO" id="GO:0035591">
    <property type="term" value="F:signaling adaptor activity"/>
    <property type="evidence" value="ECO:0000314"/>
    <property type="project" value="UniProtKB"/>
</dbReference>
<dbReference type="GO" id="GO:0140374">
    <property type="term" value="P:antiviral innate immune response"/>
    <property type="evidence" value="ECO:0000315"/>
    <property type="project" value="UniProtKB"/>
</dbReference>
<dbReference type="GO" id="GO:0018230">
    <property type="term" value="P:peptidyl-L-cysteine S-palmitoylation"/>
    <property type="evidence" value="ECO:0000250"/>
    <property type="project" value="UniProtKB"/>
</dbReference>
<dbReference type="GO" id="GO:0002230">
    <property type="term" value="P:positive regulation of defense response to virus by host"/>
    <property type="evidence" value="ECO:0000315"/>
    <property type="project" value="UniProtKB"/>
</dbReference>
<dbReference type="GO" id="GO:0006612">
    <property type="term" value="P:protein targeting to membrane"/>
    <property type="evidence" value="ECO:0000318"/>
    <property type="project" value="GO_Central"/>
</dbReference>
<dbReference type="InterPro" id="IPR001594">
    <property type="entry name" value="Palmitoyltrfase_DHHC"/>
</dbReference>
<dbReference type="InterPro" id="IPR039859">
    <property type="entry name" value="PFA4/ZDH16/20/ERF2-like"/>
</dbReference>
<dbReference type="PANTHER" id="PTHR22883:SF22">
    <property type="entry name" value="PALMITOYLTRANSFERASE ZDHHC11-RELATED"/>
    <property type="match status" value="1"/>
</dbReference>
<dbReference type="PANTHER" id="PTHR22883">
    <property type="entry name" value="ZINC FINGER DHHC DOMAIN CONTAINING PROTEIN"/>
    <property type="match status" value="1"/>
</dbReference>
<dbReference type="Pfam" id="PF01529">
    <property type="entry name" value="DHHC"/>
    <property type="match status" value="1"/>
</dbReference>
<dbReference type="PROSITE" id="PS50216">
    <property type="entry name" value="DHHC"/>
    <property type="match status" value="1"/>
</dbReference>
<protein>
    <recommendedName>
        <fullName evidence="1">Palmitoyltransferase ZDHHC11</fullName>
        <ecNumber evidence="1">2.3.1.225</ecNumber>
    </recommendedName>
    <alternativeName>
        <fullName evidence="9">Zinc finger DHHC domain-containing protein 11</fullName>
        <shortName evidence="9">DHHC-11</shortName>
    </alternativeName>
    <alternativeName>
        <fullName evidence="11">Zinc finger protein 399</fullName>
    </alternativeName>
</protein>
<sequence>MDTRSGSQCSVTPEAILNNEKLVLPPRISRVNGWSLPLHYFQVVTWAVFVGLSSATFGIFIPFLPHAWKYIAYVVTGGIFSFHLVVHLIASCIDPADSNVRLMKNYSQPMPLFDRSKHAHVIQNQFCHLCKVTVNKKTKHCISCNKCVSGFDHHCKWINNCVGSRNYWFFFSTVASATAGMLCLIAILLYVLVQYLVNPGVLRTDPRYEDVKNMNTWLLFLPLFPVQVQTLIVVIIGMLVLLLDFLGLVHLGQLLIFHIYLKAKKMTTFEYLINNRKEESSKHQAVRKDPYVQMDKGVLQQGAGALGSSAQGVKAKSSLLIHKHLCHFCTSVNQDGDSTAREGDEDPCPSALGAKARNSRLICRRLCQFSTRVHPDGGSMAQEADDAPSISTLGLQQETTEPMKTDSAESED</sequence>
<comment type="function">
    <text evidence="1 7">Endoplasmic reticulum-localized palmitoyltransferase that could catalyze the addition of palmitate onto various protein substrates and be involved in a variety of cellular processes (By similarity). Has a palmitoyltransferase activity toward NCDN and regulates NCDN association with endosome membranes through this palmitoylation (By similarity). May play a role in cell proliferation (PubMed:28331227).</text>
</comment>
<comment type="function">
    <text evidence="7">Also has a palmitoyltransferase activity-independent function in DNA virus-triggered and CGAS-mediated innate immune response (PubMed:28331227). Functions as an adapter that recruits IRF3 to STING1 to promote the activation of that key transcriptional regulator of type I interferon (IFN)-dependent immune response (PubMed:28331227).</text>
</comment>
<comment type="catalytic activity">
    <reaction evidence="1">
        <text>L-cysteinyl-[protein] + hexadecanoyl-CoA = S-hexadecanoyl-L-cysteinyl-[protein] + CoA</text>
        <dbReference type="Rhea" id="RHEA:36683"/>
        <dbReference type="Rhea" id="RHEA-COMP:10131"/>
        <dbReference type="Rhea" id="RHEA-COMP:11032"/>
        <dbReference type="ChEBI" id="CHEBI:29950"/>
        <dbReference type="ChEBI" id="CHEBI:57287"/>
        <dbReference type="ChEBI" id="CHEBI:57379"/>
        <dbReference type="ChEBI" id="CHEBI:74151"/>
        <dbReference type="EC" id="2.3.1.225"/>
    </reaction>
    <physiologicalReaction direction="left-to-right" evidence="1">
        <dbReference type="Rhea" id="RHEA:36684"/>
    </physiologicalReaction>
</comment>
<comment type="subunit">
    <text evidence="7">Interacts with IRF3 and STING1; in presence of DNA viruses recruits IRF3 to STING1 promoting IRF3 phosphorylation and activation.</text>
</comment>
<comment type="interaction">
    <interactant intactId="EBI-17961574">
        <id>Q9H8X9</id>
    </interactant>
    <interactant intactId="EBI-8638294">
        <id>Q9NUH8</id>
        <label>TMEM14B</label>
    </interactant>
    <organismsDiffer>false</organismsDiffer>
    <experiments>3</experiments>
</comment>
<comment type="subcellular location">
    <subcellularLocation>
        <location evidence="6">Endoplasmic reticulum membrane</location>
        <topology evidence="3">Multi-pass membrane protein</topology>
    </subcellularLocation>
</comment>
<comment type="alternative products">
    <event type="alternative splicing"/>
    <isoform>
        <id>Q9H8X9-1</id>
        <name>1</name>
        <sequence type="displayed"/>
    </isoform>
    <isoform>
        <id>Q9H8X9-2</id>
        <name>2</name>
        <sequence type="described" ref="VSP_055997 VSP_055998 VSP_055999"/>
    </isoform>
</comment>
<comment type="tissue specificity">
    <text evidence="6">Expressed in testis.</text>
</comment>
<comment type="domain">
    <text evidence="2">The DHHC domain is required for palmitoyltransferase activity.</text>
</comment>
<comment type="similarity">
    <text evidence="10">Belongs to the DHHC palmitoyltransferase family.</text>
</comment>
<keyword id="KW-0012">Acyltransferase</keyword>
<keyword id="KW-0025">Alternative splicing</keyword>
<keyword id="KW-0256">Endoplasmic reticulum</keyword>
<keyword id="KW-0449">Lipoprotein</keyword>
<keyword id="KW-0472">Membrane</keyword>
<keyword id="KW-0564">Palmitate</keyword>
<keyword id="KW-1267">Proteomics identification</keyword>
<keyword id="KW-1185">Reference proteome</keyword>
<keyword id="KW-0808">Transferase</keyword>
<keyword id="KW-0812">Transmembrane</keyword>
<keyword id="KW-1133">Transmembrane helix</keyword>
<evidence type="ECO:0000250" key="1">
    <source>
        <dbReference type="UniProtKB" id="Q14AK4"/>
    </source>
</evidence>
<evidence type="ECO:0000250" key="2">
    <source>
        <dbReference type="UniProtKB" id="Q8IUH5"/>
    </source>
</evidence>
<evidence type="ECO:0000255" key="3"/>
<evidence type="ECO:0000255" key="4">
    <source>
        <dbReference type="PROSITE-ProRule" id="PRU00067"/>
    </source>
</evidence>
<evidence type="ECO:0000256" key="5">
    <source>
        <dbReference type="SAM" id="MobiDB-lite"/>
    </source>
</evidence>
<evidence type="ECO:0000269" key="6">
    <source>
    </source>
</evidence>
<evidence type="ECO:0000269" key="7">
    <source>
    </source>
</evidence>
<evidence type="ECO:0000303" key="8">
    <source>
    </source>
</evidence>
<evidence type="ECO:0000303" key="9">
    <source>
    </source>
</evidence>
<evidence type="ECO:0000305" key="10"/>
<evidence type="ECO:0000312" key="11">
    <source>
        <dbReference type="HGNC" id="HGNC:19158"/>
    </source>
</evidence>
<organism>
    <name type="scientific">Homo sapiens</name>
    <name type="common">Human</name>
    <dbReference type="NCBI Taxonomy" id="9606"/>
    <lineage>
        <taxon>Eukaryota</taxon>
        <taxon>Metazoa</taxon>
        <taxon>Chordata</taxon>
        <taxon>Craniata</taxon>
        <taxon>Vertebrata</taxon>
        <taxon>Euteleostomi</taxon>
        <taxon>Mammalia</taxon>
        <taxon>Eutheria</taxon>
        <taxon>Euarchontoglires</taxon>
        <taxon>Primates</taxon>
        <taxon>Haplorrhini</taxon>
        <taxon>Catarrhini</taxon>
        <taxon>Hominidae</taxon>
        <taxon>Homo</taxon>
    </lineage>
</organism>
<accession>Q9H8X9</accession>
<accession>Q6UWR9</accession>
<name>ZDH11_HUMAN</name>